<organism>
    <name type="scientific">Mus musculus</name>
    <name type="common">Mouse</name>
    <dbReference type="NCBI Taxonomy" id="10090"/>
    <lineage>
        <taxon>Eukaryota</taxon>
        <taxon>Metazoa</taxon>
        <taxon>Chordata</taxon>
        <taxon>Craniata</taxon>
        <taxon>Vertebrata</taxon>
        <taxon>Euteleostomi</taxon>
        <taxon>Mammalia</taxon>
        <taxon>Eutheria</taxon>
        <taxon>Euarchontoglires</taxon>
        <taxon>Glires</taxon>
        <taxon>Rodentia</taxon>
        <taxon>Myomorpha</taxon>
        <taxon>Muroidea</taxon>
        <taxon>Muridae</taxon>
        <taxon>Murinae</taxon>
        <taxon>Mus</taxon>
        <taxon>Mus</taxon>
    </lineage>
</organism>
<dbReference type="EC" id="3.6.5.5" evidence="12"/>
<dbReference type="EMBL" id="L29457">
    <property type="protein sequence ID" value="AAA37319.1"/>
    <property type="molecule type" value="mRNA"/>
</dbReference>
<dbReference type="EMBL" id="L31395">
    <property type="protein sequence ID" value="AAA37318.1"/>
    <property type="molecule type" value="mRNA"/>
</dbReference>
<dbReference type="EMBL" id="L31396">
    <property type="protein sequence ID" value="AAA37323.1"/>
    <property type="molecule type" value="mRNA"/>
</dbReference>
<dbReference type="EMBL" id="L31397">
    <property type="protein sequence ID" value="AAA37324.1"/>
    <property type="status" value="ALT_FRAME"/>
    <property type="molecule type" value="mRNA"/>
</dbReference>
<dbReference type="EMBL" id="AK011651">
    <property type="protein sequence ID" value="BAB27759.1"/>
    <property type="molecule type" value="mRNA"/>
</dbReference>
<dbReference type="EMBL" id="AK144142">
    <property type="protein sequence ID" value="BAE25726.1"/>
    <property type="molecule type" value="mRNA"/>
</dbReference>
<dbReference type="EMBL" id="AK220483">
    <property type="protein sequence ID" value="BAD90284.1"/>
    <property type="status" value="ALT_INIT"/>
    <property type="molecule type" value="mRNA"/>
</dbReference>
<dbReference type="EMBL" id="AL808027">
    <property type="status" value="NOT_ANNOTATED_CDS"/>
    <property type="molecule type" value="Genomic_DNA"/>
</dbReference>
<dbReference type="EMBL" id="BC034679">
    <property type="protein sequence ID" value="AAH34679.1"/>
    <property type="molecule type" value="mRNA"/>
</dbReference>
<dbReference type="EMBL" id="BC058623">
    <property type="protein sequence ID" value="AAH58623.1"/>
    <property type="molecule type" value="mRNA"/>
</dbReference>
<dbReference type="EMBL" id="AF170568">
    <property type="protein sequence ID" value="AAF24220.1"/>
    <property type="molecule type" value="Genomic_DNA"/>
</dbReference>
<dbReference type="CCDS" id="CCDS38102.1">
    <molecule id="P39053-6"/>
</dbReference>
<dbReference type="CCDS" id="CCDS79772.1">
    <molecule id="P39053-3"/>
</dbReference>
<dbReference type="RefSeq" id="NP_001288666.1">
    <molecule id="P39053-3"/>
    <property type="nucleotide sequence ID" value="NM_001301737.1"/>
</dbReference>
<dbReference type="RefSeq" id="NP_034195.2">
    <molecule id="P39053-6"/>
    <property type="nucleotide sequence ID" value="NM_010065.3"/>
</dbReference>
<dbReference type="RefSeq" id="XP_006497718.2">
    <molecule id="P39053-4"/>
    <property type="nucleotide sequence ID" value="XM_006497655.4"/>
</dbReference>
<dbReference type="RefSeq" id="XP_006497721.2">
    <molecule id="P39053-3"/>
    <property type="nucleotide sequence ID" value="XM_006497658.4"/>
</dbReference>
<dbReference type="RefSeq" id="XP_006497722.2">
    <molecule id="P39053-3"/>
    <property type="nucleotide sequence ID" value="XM_006497659.4"/>
</dbReference>
<dbReference type="RefSeq" id="XP_006497723.2">
    <molecule id="P39053-3"/>
    <property type="nucleotide sequence ID" value="XM_006497660.3"/>
</dbReference>
<dbReference type="RefSeq" id="XP_006497724.2">
    <molecule id="P39053-5"/>
    <property type="nucleotide sequence ID" value="XM_006497661.3"/>
</dbReference>
<dbReference type="RefSeq" id="XP_017170817.1">
    <molecule id="P39053-5"/>
    <property type="nucleotide sequence ID" value="XM_017315328.2"/>
</dbReference>
<dbReference type="BMRB" id="P39053"/>
<dbReference type="SMR" id="P39053"/>
<dbReference type="BioGRID" id="199257">
    <property type="interactions" value="63"/>
</dbReference>
<dbReference type="CORUM" id="P39053"/>
<dbReference type="FunCoup" id="P39053">
    <property type="interactions" value="1556"/>
</dbReference>
<dbReference type="IntAct" id="P39053">
    <property type="interactions" value="37"/>
</dbReference>
<dbReference type="MINT" id="P39053"/>
<dbReference type="STRING" id="10090.ENSMUSP00000088618"/>
<dbReference type="ChEMBL" id="CHEMBL4523222"/>
<dbReference type="GlyGen" id="P39053">
    <property type="glycosylation" value="8 sites, 7 N-linked glycans (5 sites), 1 O-linked glycan (2 sites)"/>
</dbReference>
<dbReference type="iPTMnet" id="P39053"/>
<dbReference type="MetOSite" id="P39053"/>
<dbReference type="PhosphoSitePlus" id="P39053"/>
<dbReference type="SwissPalm" id="P39053"/>
<dbReference type="jPOST" id="P39053"/>
<dbReference type="PaxDb" id="10090-ENSMUSP00000088618"/>
<dbReference type="PeptideAtlas" id="P39053"/>
<dbReference type="ProteomicsDB" id="277649">
    <molecule id="P39053-1"/>
</dbReference>
<dbReference type="ProteomicsDB" id="277650">
    <molecule id="P39053-3"/>
</dbReference>
<dbReference type="ProteomicsDB" id="277651">
    <molecule id="P39053-4"/>
</dbReference>
<dbReference type="ProteomicsDB" id="277652">
    <molecule id="P39053-5"/>
</dbReference>
<dbReference type="ProteomicsDB" id="277653">
    <molecule id="P39053-6"/>
</dbReference>
<dbReference type="Pumba" id="P39053"/>
<dbReference type="Antibodypedia" id="3472">
    <property type="antibodies" value="689 antibodies from 46 providers"/>
</dbReference>
<dbReference type="DNASU" id="13429"/>
<dbReference type="Ensembl" id="ENSMUST00000078352.12">
    <molecule id="P39053-3"/>
    <property type="protein sequence ID" value="ENSMUSP00000077461.6"/>
    <property type="gene ID" value="ENSMUSG00000026825.18"/>
</dbReference>
<dbReference type="Ensembl" id="ENSMUST00000091089.12">
    <molecule id="P39053-6"/>
    <property type="protein sequence ID" value="ENSMUSP00000088618.6"/>
    <property type="gene ID" value="ENSMUSG00000026825.18"/>
</dbReference>
<dbReference type="Ensembl" id="ENSMUST00000113350.8">
    <molecule id="P39053-5"/>
    <property type="protein sequence ID" value="ENSMUSP00000108977.2"/>
    <property type="gene ID" value="ENSMUSG00000026825.18"/>
</dbReference>
<dbReference type="Ensembl" id="ENSMUST00000113352.9">
    <molecule id="P39053-5"/>
    <property type="protein sequence ID" value="ENSMUSP00000108979.3"/>
    <property type="gene ID" value="ENSMUSG00000026825.18"/>
</dbReference>
<dbReference type="Ensembl" id="ENSMUST00000113365.8">
    <molecule id="P39053-4"/>
    <property type="protein sequence ID" value="ENSMUSP00000108992.2"/>
    <property type="gene ID" value="ENSMUSG00000026825.18"/>
</dbReference>
<dbReference type="Ensembl" id="ENSMUST00000139624.8">
    <molecule id="P39053-1"/>
    <property type="protein sequence ID" value="ENSMUSP00000122679.2"/>
    <property type="gene ID" value="ENSMUSG00000026825.18"/>
</dbReference>
<dbReference type="Ensembl" id="ENSMUST00000202578.4">
    <molecule id="P39053-3"/>
    <property type="protein sequence ID" value="ENSMUSP00000143955.2"/>
    <property type="gene ID" value="ENSMUSG00000026825.18"/>
</dbReference>
<dbReference type="GeneID" id="13429"/>
<dbReference type="KEGG" id="mmu:13429"/>
<dbReference type="UCSC" id="uc008jfc.2">
    <molecule id="P39053-6"/>
    <property type="organism name" value="mouse"/>
</dbReference>
<dbReference type="UCSC" id="uc008jfd.3">
    <molecule id="P39053-3"/>
    <property type="organism name" value="mouse"/>
</dbReference>
<dbReference type="UCSC" id="uc029twn.1">
    <molecule id="P39053-5"/>
    <property type="organism name" value="mouse"/>
</dbReference>
<dbReference type="AGR" id="MGI:107384"/>
<dbReference type="CTD" id="1759"/>
<dbReference type="MGI" id="MGI:107384">
    <property type="gene designation" value="Dnm1"/>
</dbReference>
<dbReference type="VEuPathDB" id="HostDB:ENSMUSG00000026825"/>
<dbReference type="eggNOG" id="KOG0446">
    <property type="taxonomic scope" value="Eukaryota"/>
</dbReference>
<dbReference type="GeneTree" id="ENSGT00940000155214"/>
<dbReference type="InParanoid" id="P39053"/>
<dbReference type="OMA" id="MQMVQTF"/>
<dbReference type="OrthoDB" id="5061070at2759"/>
<dbReference type="PhylomeDB" id="P39053"/>
<dbReference type="TreeFam" id="TF300362"/>
<dbReference type="BRENDA" id="3.6.5.5">
    <property type="organism ID" value="3474"/>
</dbReference>
<dbReference type="Reactome" id="R-MMU-166016">
    <property type="pathway name" value="Toll Like Receptor 4 (TLR4) Cascade"/>
</dbReference>
<dbReference type="Reactome" id="R-MMU-190873">
    <property type="pathway name" value="Gap junction degradation"/>
</dbReference>
<dbReference type="Reactome" id="R-MMU-196025">
    <property type="pathway name" value="Formation of annular gap junctions"/>
</dbReference>
<dbReference type="Reactome" id="R-MMU-2132295">
    <property type="pathway name" value="MHC class II antigen presentation"/>
</dbReference>
<dbReference type="Reactome" id="R-MMU-437239">
    <property type="pathway name" value="Recycling pathway of L1"/>
</dbReference>
<dbReference type="Reactome" id="R-MMU-8856828">
    <property type="pathway name" value="Clathrin-mediated endocytosis"/>
</dbReference>
<dbReference type="BioGRID-ORCS" id="13429">
    <property type="hits" value="2 hits in 78 CRISPR screens"/>
</dbReference>
<dbReference type="CD-CODE" id="CE726F99">
    <property type="entry name" value="Postsynaptic density"/>
</dbReference>
<dbReference type="ChiTaRS" id="Dnm1">
    <property type="organism name" value="mouse"/>
</dbReference>
<dbReference type="PRO" id="PR:P39053"/>
<dbReference type="Proteomes" id="UP000000589">
    <property type="component" value="Chromosome 2"/>
</dbReference>
<dbReference type="RNAct" id="P39053">
    <property type="molecule type" value="protein"/>
</dbReference>
<dbReference type="Bgee" id="ENSMUSG00000026825">
    <property type="expression patterns" value="Expressed in CA3 field of hippocampus and 226 other cell types or tissues"/>
</dbReference>
<dbReference type="ExpressionAtlas" id="P39053">
    <property type="expression patterns" value="baseline and differential"/>
</dbReference>
<dbReference type="GO" id="GO:0042995">
    <property type="term" value="C:cell projection"/>
    <property type="evidence" value="ECO:0007669"/>
    <property type="project" value="UniProtKB-KW"/>
</dbReference>
<dbReference type="GO" id="GO:0042583">
    <property type="term" value="C:chromaffin granule"/>
    <property type="evidence" value="ECO:0007669"/>
    <property type="project" value="UniProtKB-SubCell"/>
</dbReference>
<dbReference type="GO" id="GO:0005905">
    <property type="term" value="C:clathrin-coated pit"/>
    <property type="evidence" value="ECO:0000250"/>
    <property type="project" value="UniProtKB"/>
</dbReference>
<dbReference type="GO" id="GO:0030139">
    <property type="term" value="C:endocytic vesicle"/>
    <property type="evidence" value="ECO:0000250"/>
    <property type="project" value="UniProtKB"/>
</dbReference>
<dbReference type="GO" id="GO:0098978">
    <property type="term" value="C:glutamatergic synapse"/>
    <property type="evidence" value="ECO:0000314"/>
    <property type="project" value="SynGO"/>
</dbReference>
<dbReference type="GO" id="GO:0030117">
    <property type="term" value="C:membrane coat"/>
    <property type="evidence" value="ECO:0000314"/>
    <property type="project" value="MGI"/>
</dbReference>
<dbReference type="GO" id="GO:0005874">
    <property type="term" value="C:microtubule"/>
    <property type="evidence" value="ECO:0007669"/>
    <property type="project" value="UniProtKB-KW"/>
</dbReference>
<dbReference type="GO" id="GO:0043209">
    <property type="term" value="C:myelin sheath"/>
    <property type="evidence" value="ECO:0007005"/>
    <property type="project" value="UniProtKB"/>
</dbReference>
<dbReference type="GO" id="GO:0001917">
    <property type="term" value="C:photoreceptor inner segment"/>
    <property type="evidence" value="ECO:0000314"/>
    <property type="project" value="MGI"/>
</dbReference>
<dbReference type="GO" id="GO:0098684">
    <property type="term" value="C:photoreceptor ribbon synapse"/>
    <property type="evidence" value="ECO:0000314"/>
    <property type="project" value="SynGO"/>
</dbReference>
<dbReference type="GO" id="GO:0098793">
    <property type="term" value="C:presynapse"/>
    <property type="evidence" value="ECO:0000250"/>
    <property type="project" value="UniProtKB"/>
</dbReference>
<dbReference type="GO" id="GO:0098835">
    <property type="term" value="C:presynaptic endocytic zone membrane"/>
    <property type="evidence" value="ECO:0000314"/>
    <property type="project" value="SynGO"/>
</dbReference>
<dbReference type="GO" id="GO:0019003">
    <property type="term" value="F:GDP binding"/>
    <property type="evidence" value="ECO:0000314"/>
    <property type="project" value="UniProtKB"/>
</dbReference>
<dbReference type="GO" id="GO:0005525">
    <property type="term" value="F:GTP binding"/>
    <property type="evidence" value="ECO:0007669"/>
    <property type="project" value="UniProtKB-KW"/>
</dbReference>
<dbReference type="GO" id="GO:0003924">
    <property type="term" value="F:GTPase activity"/>
    <property type="evidence" value="ECO:0000314"/>
    <property type="project" value="UniProtKB"/>
</dbReference>
<dbReference type="GO" id="GO:0042802">
    <property type="term" value="F:identical protein binding"/>
    <property type="evidence" value="ECO:0000353"/>
    <property type="project" value="MGI"/>
</dbReference>
<dbReference type="GO" id="GO:0005546">
    <property type="term" value="F:phosphatidylinositol-4,5-bisphosphate binding"/>
    <property type="evidence" value="ECO:0000250"/>
    <property type="project" value="UniProtKB"/>
</dbReference>
<dbReference type="GO" id="GO:0042803">
    <property type="term" value="F:protein homodimerization activity"/>
    <property type="evidence" value="ECO:0000250"/>
    <property type="project" value="UniProtKB"/>
</dbReference>
<dbReference type="GO" id="GO:0019901">
    <property type="term" value="F:protein kinase binding"/>
    <property type="evidence" value="ECO:0000353"/>
    <property type="project" value="ParkinsonsUK-UCL"/>
</dbReference>
<dbReference type="GO" id="GO:0099049">
    <property type="term" value="P:clathrin coat assembly involved in endocytosis"/>
    <property type="evidence" value="ECO:0000315"/>
    <property type="project" value="UniProtKB"/>
</dbReference>
<dbReference type="GO" id="GO:0050804">
    <property type="term" value="P:modulation of chemical synaptic transmission"/>
    <property type="evidence" value="ECO:0000314"/>
    <property type="project" value="SynGO"/>
</dbReference>
<dbReference type="GO" id="GO:0051289">
    <property type="term" value="P:protein homotetramerization"/>
    <property type="evidence" value="ECO:0000250"/>
    <property type="project" value="UniProtKB"/>
</dbReference>
<dbReference type="GO" id="GO:0006898">
    <property type="term" value="P:receptor-mediated endocytosis"/>
    <property type="evidence" value="ECO:0000250"/>
    <property type="project" value="UniProtKB"/>
</dbReference>
<dbReference type="GO" id="GO:0097494">
    <property type="term" value="P:regulation of vesicle size"/>
    <property type="evidence" value="ECO:0000315"/>
    <property type="project" value="UniProtKB"/>
</dbReference>
<dbReference type="GO" id="GO:0048488">
    <property type="term" value="P:synaptic vesicle endocytosis"/>
    <property type="evidence" value="ECO:0000314"/>
    <property type="project" value="SynGO"/>
</dbReference>
<dbReference type="GO" id="GO:0099050">
    <property type="term" value="P:vesicle scission"/>
    <property type="evidence" value="ECO:0000250"/>
    <property type="project" value="UniProtKB"/>
</dbReference>
<dbReference type="CDD" id="cd08771">
    <property type="entry name" value="DLP_1"/>
    <property type="match status" value="1"/>
</dbReference>
<dbReference type="CDD" id="cd01256">
    <property type="entry name" value="PH_dynamin"/>
    <property type="match status" value="1"/>
</dbReference>
<dbReference type="FunFam" id="1.20.120.1240:FF:000019">
    <property type="entry name" value="Dynamin 2"/>
    <property type="match status" value="1"/>
</dbReference>
<dbReference type="FunFam" id="1.20.120.1240:FF:000014">
    <property type="entry name" value="Dynamin 2b"/>
    <property type="match status" value="1"/>
</dbReference>
<dbReference type="FunFam" id="3.40.50.300:FF:000045">
    <property type="entry name" value="dynamin-1 isoform X2"/>
    <property type="match status" value="1"/>
</dbReference>
<dbReference type="FunFam" id="2.30.29.30:FF:000555">
    <property type="entry name" value="dynamin-1-like isoform X1"/>
    <property type="match status" value="1"/>
</dbReference>
<dbReference type="Gene3D" id="1.20.120.1240">
    <property type="entry name" value="Dynamin, middle domain"/>
    <property type="match status" value="1"/>
</dbReference>
<dbReference type="Gene3D" id="3.40.50.300">
    <property type="entry name" value="P-loop containing nucleotide triphosphate hydrolases"/>
    <property type="match status" value="1"/>
</dbReference>
<dbReference type="Gene3D" id="2.30.29.30">
    <property type="entry name" value="Pleckstrin-homology domain (PH domain)/Phosphotyrosine-binding domain (PTB)"/>
    <property type="match status" value="1"/>
</dbReference>
<dbReference type="InterPro" id="IPR022812">
    <property type="entry name" value="Dynamin"/>
</dbReference>
<dbReference type="InterPro" id="IPR001401">
    <property type="entry name" value="Dynamin_GTPase"/>
</dbReference>
<dbReference type="InterPro" id="IPR019762">
    <property type="entry name" value="Dynamin_GTPase_CS"/>
</dbReference>
<dbReference type="InterPro" id="IPR045063">
    <property type="entry name" value="Dynamin_N"/>
</dbReference>
<dbReference type="InterPro" id="IPR000375">
    <property type="entry name" value="Dynamin_stalk"/>
</dbReference>
<dbReference type="InterPro" id="IPR030381">
    <property type="entry name" value="G_DYNAMIN_dom"/>
</dbReference>
<dbReference type="InterPro" id="IPR003130">
    <property type="entry name" value="GED"/>
</dbReference>
<dbReference type="InterPro" id="IPR020850">
    <property type="entry name" value="GED_dom"/>
</dbReference>
<dbReference type="InterPro" id="IPR027417">
    <property type="entry name" value="P-loop_NTPase"/>
</dbReference>
<dbReference type="InterPro" id="IPR011993">
    <property type="entry name" value="PH-like_dom_sf"/>
</dbReference>
<dbReference type="InterPro" id="IPR001849">
    <property type="entry name" value="PH_domain"/>
</dbReference>
<dbReference type="PANTHER" id="PTHR11566">
    <property type="entry name" value="DYNAMIN"/>
    <property type="match status" value="1"/>
</dbReference>
<dbReference type="PANTHER" id="PTHR11566:SF32">
    <property type="entry name" value="DYNAMIN-1"/>
    <property type="match status" value="1"/>
</dbReference>
<dbReference type="Pfam" id="PF01031">
    <property type="entry name" value="Dynamin_M"/>
    <property type="match status" value="1"/>
</dbReference>
<dbReference type="Pfam" id="PF00350">
    <property type="entry name" value="Dynamin_N"/>
    <property type="match status" value="1"/>
</dbReference>
<dbReference type="Pfam" id="PF02212">
    <property type="entry name" value="GED"/>
    <property type="match status" value="1"/>
</dbReference>
<dbReference type="Pfam" id="PF00169">
    <property type="entry name" value="PH"/>
    <property type="match status" value="1"/>
</dbReference>
<dbReference type="PRINTS" id="PR00195">
    <property type="entry name" value="DYNAMIN"/>
</dbReference>
<dbReference type="SMART" id="SM00053">
    <property type="entry name" value="DYNc"/>
    <property type="match status" value="1"/>
</dbReference>
<dbReference type="SMART" id="SM00302">
    <property type="entry name" value="GED"/>
    <property type="match status" value="1"/>
</dbReference>
<dbReference type="SMART" id="SM00233">
    <property type="entry name" value="PH"/>
    <property type="match status" value="1"/>
</dbReference>
<dbReference type="SUPFAM" id="SSF52540">
    <property type="entry name" value="P-loop containing nucleoside triphosphate hydrolases"/>
    <property type="match status" value="1"/>
</dbReference>
<dbReference type="SUPFAM" id="SSF50729">
    <property type="entry name" value="PH domain-like"/>
    <property type="match status" value="1"/>
</dbReference>
<dbReference type="PROSITE" id="PS00410">
    <property type="entry name" value="G_DYNAMIN_1"/>
    <property type="match status" value="1"/>
</dbReference>
<dbReference type="PROSITE" id="PS51718">
    <property type="entry name" value="G_DYNAMIN_2"/>
    <property type="match status" value="1"/>
</dbReference>
<dbReference type="PROSITE" id="PS51388">
    <property type="entry name" value="GED"/>
    <property type="match status" value="1"/>
</dbReference>
<dbReference type="PROSITE" id="PS50003">
    <property type="entry name" value="PH_DOMAIN"/>
    <property type="match status" value="1"/>
</dbReference>
<evidence type="ECO:0000250" key="1">
    <source>
        <dbReference type="UniProtKB" id="P21575"/>
    </source>
</evidence>
<evidence type="ECO:0000250" key="2">
    <source>
        <dbReference type="UniProtKB" id="Q05193"/>
    </source>
</evidence>
<evidence type="ECO:0000250" key="3">
    <source>
        <dbReference type="UniProtKB" id="Q08DF4"/>
    </source>
</evidence>
<evidence type="ECO:0000255" key="4">
    <source>
        <dbReference type="PROSITE-ProRule" id="PRU00145"/>
    </source>
</evidence>
<evidence type="ECO:0000255" key="5">
    <source>
        <dbReference type="PROSITE-ProRule" id="PRU00720"/>
    </source>
</evidence>
<evidence type="ECO:0000255" key="6">
    <source>
        <dbReference type="PROSITE-ProRule" id="PRU01055"/>
    </source>
</evidence>
<evidence type="ECO:0000256" key="7">
    <source>
        <dbReference type="SAM" id="MobiDB-lite"/>
    </source>
</evidence>
<evidence type="ECO:0000269" key="8">
    <source>
    </source>
</evidence>
<evidence type="ECO:0000269" key="9">
    <source>
    </source>
</evidence>
<evidence type="ECO:0000269" key="10">
    <source>
    </source>
</evidence>
<evidence type="ECO:0000269" key="11">
    <source>
    </source>
</evidence>
<evidence type="ECO:0000269" key="12">
    <source>
    </source>
</evidence>
<evidence type="ECO:0000269" key="13">
    <source>
    </source>
</evidence>
<evidence type="ECO:0000303" key="14">
    <source>
    </source>
</evidence>
<evidence type="ECO:0000303" key="15">
    <source>
    </source>
</evidence>
<evidence type="ECO:0000303" key="16">
    <source>
    </source>
</evidence>
<evidence type="ECO:0000303" key="17">
    <source>
    </source>
</evidence>
<evidence type="ECO:0000303" key="18">
    <source>
    </source>
</evidence>
<evidence type="ECO:0000303" key="19">
    <source ref="3"/>
</evidence>
<evidence type="ECO:0000305" key="20"/>
<evidence type="ECO:0000312" key="21">
    <source>
        <dbReference type="MGI" id="MGI:107384"/>
    </source>
</evidence>
<evidence type="ECO:0007744" key="22">
    <source>
    </source>
</evidence>
<evidence type="ECO:0007744" key="23">
    <source>
    </source>
</evidence>
<evidence type="ECO:0007744" key="24">
    <source>
    </source>
</evidence>
<evidence type="ECO:0007744" key="25">
    <source>
    </source>
</evidence>
<evidence type="ECO:0007744" key="26">
    <source>
    </source>
</evidence>
<accession>P39053</accession>
<accession>A2AN50</accession>
<accession>A2AN51</accession>
<accession>A2AN54</accession>
<accession>A2AN55</accession>
<accession>Q3UNM1</accession>
<accession>Q5DTN7</accession>
<accession>Q61358</accession>
<accession>Q61359</accession>
<accession>Q61360</accession>
<accession>Q6PDM5</accession>
<accession>Q8JZZ4</accession>
<accession>Q9CSY7</accession>
<accession>Q9QXX1</accession>
<keyword id="KW-0025">Alternative splicing</keyword>
<keyword id="KW-1003">Cell membrane</keyword>
<keyword id="KW-0966">Cell projection</keyword>
<keyword id="KW-0168">Coated pit</keyword>
<keyword id="KW-0968">Cytoplasmic vesicle</keyword>
<keyword id="KW-0903">Direct protein sequencing</keyword>
<keyword id="KW-0254">Endocytosis</keyword>
<keyword id="KW-0342">GTP-binding</keyword>
<keyword id="KW-0378">Hydrolase</keyword>
<keyword id="KW-0472">Membrane</keyword>
<keyword id="KW-0488">Methylation</keyword>
<keyword id="KW-0493">Microtubule</keyword>
<keyword id="KW-0505">Motor protein</keyword>
<keyword id="KW-0944">Nitration</keyword>
<keyword id="KW-0547">Nucleotide-binding</keyword>
<keyword id="KW-0597">Phosphoprotein</keyword>
<keyword id="KW-1185">Reference proteome</keyword>
<keyword id="KW-0770">Synapse</keyword>
<protein>
    <recommendedName>
        <fullName evidence="2">Dynamin-1</fullName>
        <ecNumber evidence="12">3.6.5.5</ecNumber>
    </recommendedName>
    <alternativeName>
        <fullName evidence="17">Dynamin</fullName>
    </alternativeName>
    <alternativeName>
        <fullName evidence="14">Dynamin I</fullName>
    </alternativeName>
</protein>
<proteinExistence type="evidence at protein level"/>
<name>DYN1_MOUSE</name>
<reference key="1">
    <citation type="journal article" date="1997" name="Genomics">
        <title>Dynamin genes Dnm1 and Dnm2 are located on proximal mouse chromosomes 2 and 9, respectively.</title>
        <authorList>
            <person name="Klocke R."/>
            <person name="Augustin A."/>
            <person name="Ronsiek M."/>
            <person name="Stief A."/>
            <person name="van der Putten H."/>
            <person name="Jockusch H."/>
        </authorList>
    </citation>
    <scope>NUCLEOTIDE SEQUENCE [MRNA] (ISOFORMS 3; 4; 5 AND 6)</scope>
    <source>
        <strain>NIH Swiss</strain>
        <tissue>Brain</tissue>
    </source>
</reference>
<reference key="2">
    <citation type="journal article" date="2005" name="Science">
        <title>The transcriptional landscape of the mammalian genome.</title>
        <authorList>
            <person name="Carninci P."/>
            <person name="Kasukawa T."/>
            <person name="Katayama S."/>
            <person name="Gough J."/>
            <person name="Frith M.C."/>
            <person name="Maeda N."/>
            <person name="Oyama R."/>
            <person name="Ravasi T."/>
            <person name="Lenhard B."/>
            <person name="Wells C."/>
            <person name="Kodzius R."/>
            <person name="Shimokawa K."/>
            <person name="Bajic V.B."/>
            <person name="Brenner S.E."/>
            <person name="Batalov S."/>
            <person name="Forrest A.R."/>
            <person name="Zavolan M."/>
            <person name="Davis M.J."/>
            <person name="Wilming L.G."/>
            <person name="Aidinis V."/>
            <person name="Allen J.E."/>
            <person name="Ambesi-Impiombato A."/>
            <person name="Apweiler R."/>
            <person name="Aturaliya R.N."/>
            <person name="Bailey T.L."/>
            <person name="Bansal M."/>
            <person name="Baxter L."/>
            <person name="Beisel K.W."/>
            <person name="Bersano T."/>
            <person name="Bono H."/>
            <person name="Chalk A.M."/>
            <person name="Chiu K.P."/>
            <person name="Choudhary V."/>
            <person name="Christoffels A."/>
            <person name="Clutterbuck D.R."/>
            <person name="Crowe M.L."/>
            <person name="Dalla E."/>
            <person name="Dalrymple B.P."/>
            <person name="de Bono B."/>
            <person name="Della Gatta G."/>
            <person name="di Bernardo D."/>
            <person name="Down T."/>
            <person name="Engstrom P."/>
            <person name="Fagiolini M."/>
            <person name="Faulkner G."/>
            <person name="Fletcher C.F."/>
            <person name="Fukushima T."/>
            <person name="Furuno M."/>
            <person name="Futaki S."/>
            <person name="Gariboldi M."/>
            <person name="Georgii-Hemming P."/>
            <person name="Gingeras T.R."/>
            <person name="Gojobori T."/>
            <person name="Green R.E."/>
            <person name="Gustincich S."/>
            <person name="Harbers M."/>
            <person name="Hayashi Y."/>
            <person name="Hensch T.K."/>
            <person name="Hirokawa N."/>
            <person name="Hill D."/>
            <person name="Huminiecki L."/>
            <person name="Iacono M."/>
            <person name="Ikeo K."/>
            <person name="Iwama A."/>
            <person name="Ishikawa T."/>
            <person name="Jakt M."/>
            <person name="Kanapin A."/>
            <person name="Katoh M."/>
            <person name="Kawasawa Y."/>
            <person name="Kelso J."/>
            <person name="Kitamura H."/>
            <person name="Kitano H."/>
            <person name="Kollias G."/>
            <person name="Krishnan S.P."/>
            <person name="Kruger A."/>
            <person name="Kummerfeld S.K."/>
            <person name="Kurochkin I.V."/>
            <person name="Lareau L.F."/>
            <person name="Lazarevic D."/>
            <person name="Lipovich L."/>
            <person name="Liu J."/>
            <person name="Liuni S."/>
            <person name="McWilliam S."/>
            <person name="Madan Babu M."/>
            <person name="Madera M."/>
            <person name="Marchionni L."/>
            <person name="Matsuda H."/>
            <person name="Matsuzawa S."/>
            <person name="Miki H."/>
            <person name="Mignone F."/>
            <person name="Miyake S."/>
            <person name="Morris K."/>
            <person name="Mottagui-Tabar S."/>
            <person name="Mulder N."/>
            <person name="Nakano N."/>
            <person name="Nakauchi H."/>
            <person name="Ng P."/>
            <person name="Nilsson R."/>
            <person name="Nishiguchi S."/>
            <person name="Nishikawa S."/>
            <person name="Nori F."/>
            <person name="Ohara O."/>
            <person name="Okazaki Y."/>
            <person name="Orlando V."/>
            <person name="Pang K.C."/>
            <person name="Pavan W.J."/>
            <person name="Pavesi G."/>
            <person name="Pesole G."/>
            <person name="Petrovsky N."/>
            <person name="Piazza S."/>
            <person name="Reed J."/>
            <person name="Reid J.F."/>
            <person name="Ring B.Z."/>
            <person name="Ringwald M."/>
            <person name="Rost B."/>
            <person name="Ruan Y."/>
            <person name="Salzberg S.L."/>
            <person name="Sandelin A."/>
            <person name="Schneider C."/>
            <person name="Schoenbach C."/>
            <person name="Sekiguchi K."/>
            <person name="Semple C.A."/>
            <person name="Seno S."/>
            <person name="Sessa L."/>
            <person name="Sheng Y."/>
            <person name="Shibata Y."/>
            <person name="Shimada H."/>
            <person name="Shimada K."/>
            <person name="Silva D."/>
            <person name="Sinclair B."/>
            <person name="Sperling S."/>
            <person name="Stupka E."/>
            <person name="Sugiura K."/>
            <person name="Sultana R."/>
            <person name="Takenaka Y."/>
            <person name="Taki K."/>
            <person name="Tammoja K."/>
            <person name="Tan S.L."/>
            <person name="Tang S."/>
            <person name="Taylor M.S."/>
            <person name="Tegner J."/>
            <person name="Teichmann S.A."/>
            <person name="Ueda H.R."/>
            <person name="van Nimwegen E."/>
            <person name="Verardo R."/>
            <person name="Wei C.L."/>
            <person name="Yagi K."/>
            <person name="Yamanishi H."/>
            <person name="Zabarovsky E."/>
            <person name="Zhu S."/>
            <person name="Zimmer A."/>
            <person name="Hide W."/>
            <person name="Bult C."/>
            <person name="Grimmond S.M."/>
            <person name="Teasdale R.D."/>
            <person name="Liu E.T."/>
            <person name="Brusic V."/>
            <person name="Quackenbush J."/>
            <person name="Wahlestedt C."/>
            <person name="Mattick J.S."/>
            <person name="Hume D.A."/>
            <person name="Kai C."/>
            <person name="Sasaki D."/>
            <person name="Tomaru Y."/>
            <person name="Fukuda S."/>
            <person name="Kanamori-Katayama M."/>
            <person name="Suzuki M."/>
            <person name="Aoki J."/>
            <person name="Arakawa T."/>
            <person name="Iida J."/>
            <person name="Imamura K."/>
            <person name="Itoh M."/>
            <person name="Kato T."/>
            <person name="Kawaji H."/>
            <person name="Kawagashira N."/>
            <person name="Kawashima T."/>
            <person name="Kojima M."/>
            <person name="Kondo S."/>
            <person name="Konno H."/>
            <person name="Nakano K."/>
            <person name="Ninomiya N."/>
            <person name="Nishio T."/>
            <person name="Okada M."/>
            <person name="Plessy C."/>
            <person name="Shibata K."/>
            <person name="Shiraki T."/>
            <person name="Suzuki S."/>
            <person name="Tagami M."/>
            <person name="Waki K."/>
            <person name="Watahiki A."/>
            <person name="Okamura-Oho Y."/>
            <person name="Suzuki H."/>
            <person name="Kawai J."/>
            <person name="Hayashizaki Y."/>
        </authorList>
    </citation>
    <scope>NUCLEOTIDE SEQUENCE [LARGE SCALE MRNA] (ISOFORM 6)</scope>
    <source>
        <strain>C57BL/6J</strain>
        <tissue>Colon</tissue>
        <tissue>Embryo</tissue>
    </source>
</reference>
<reference key="3">
    <citation type="submission" date="2005-02" db="EMBL/GenBank/DDBJ databases">
        <title>Prediction of the coding sequences of mouse homologues of KIAA gene. The complete nucleotide sequences of mouse KIAA-homologous cDNAs identified by screening of terminal sequences of cDNA clones randomly sampled from size-fractionated libraries.</title>
        <authorList>
            <person name="Okazaki N."/>
            <person name="Kikuno R.F."/>
            <person name="Ohara R."/>
            <person name="Inamoto S."/>
            <person name="Nagase T."/>
            <person name="Ohara O."/>
            <person name="Koga H."/>
        </authorList>
    </citation>
    <scope>NUCLEOTIDE SEQUENCE [LARGE SCALE MRNA] (ISOFORM 3)</scope>
</reference>
<reference key="4">
    <citation type="journal article" date="2009" name="PLoS Biol.">
        <title>Lineage-specific biology revealed by a finished genome assembly of the mouse.</title>
        <authorList>
            <person name="Church D.M."/>
            <person name="Goodstadt L."/>
            <person name="Hillier L.W."/>
            <person name="Zody M.C."/>
            <person name="Goldstein S."/>
            <person name="She X."/>
            <person name="Bult C.J."/>
            <person name="Agarwala R."/>
            <person name="Cherry J.L."/>
            <person name="DiCuccio M."/>
            <person name="Hlavina W."/>
            <person name="Kapustin Y."/>
            <person name="Meric P."/>
            <person name="Maglott D."/>
            <person name="Birtle Z."/>
            <person name="Marques A.C."/>
            <person name="Graves T."/>
            <person name="Zhou S."/>
            <person name="Teague B."/>
            <person name="Potamousis K."/>
            <person name="Churas C."/>
            <person name="Place M."/>
            <person name="Herschleb J."/>
            <person name="Runnheim R."/>
            <person name="Forrest D."/>
            <person name="Amos-Landgraf J."/>
            <person name="Schwartz D.C."/>
            <person name="Cheng Z."/>
            <person name="Lindblad-Toh K."/>
            <person name="Eichler E.E."/>
            <person name="Ponting C.P."/>
        </authorList>
    </citation>
    <scope>NUCLEOTIDE SEQUENCE [LARGE SCALE GENOMIC DNA]</scope>
    <source>
        <strain>C57BL/6J</strain>
    </source>
</reference>
<reference key="5">
    <citation type="journal article" date="2004" name="Genome Res.">
        <title>The status, quality, and expansion of the NIH full-length cDNA project: the Mammalian Gene Collection (MGC).</title>
        <authorList>
            <consortium name="The MGC Project Team"/>
        </authorList>
    </citation>
    <scope>NUCLEOTIDE SEQUENCE [LARGE SCALE MRNA] (ISOFORMS 1 AND 5)</scope>
    <source>
        <strain>C57BL/6J</strain>
        <tissue>Brain</tissue>
        <tissue>Retina</tissue>
    </source>
</reference>
<reference key="6">
    <citation type="journal article" date="2000" name="Biochem. J.">
        <title>Characterization of the mouse dynamin I gene promoter and identification of sequences that direct expression in neuronal cells.</title>
        <authorList>
            <person name="Yoo J."/>
            <person name="Lee S.S."/>
            <person name="Jeong M.J."/>
            <person name="Lee K.I."/>
            <person name="Kwon B.M."/>
            <person name="Kim S.H."/>
            <person name="Park Y.M."/>
            <person name="Han M.Y."/>
        </authorList>
    </citation>
    <scope>NUCLEOTIDE SEQUENCE [GENOMIC DNA] OF 1-32</scope>
</reference>
<reference key="7">
    <citation type="submission" date="2009-01" db="UniProtKB">
        <authorList>
            <person name="Lubec G."/>
            <person name="Klug S."/>
            <person name="Kang S.U."/>
            <person name="Sunyer B."/>
            <person name="Chen W.-Q."/>
        </authorList>
    </citation>
    <scope>PROTEIN SEQUENCE OF 5-54; 67-87; 91-107; 114-188; 207-217; 230-237; 247-266; 280-290; 300-309; 328-361; 370-376; 400-414; 511-535; 563-571; 584-594; 664-675 AND 684-694</scope>
    <source>
        <strain>C57BL/6J</strain>
        <strain>OF1</strain>
        <tissue>Brain</tissue>
        <tissue>Hippocampus</tissue>
    </source>
</reference>
<reference key="8">
    <citation type="journal article" date="2000" name="J. Cell Sci.">
        <title>All three PACSIN isoforms bind to endocytic proteins and inhibit endocytosis.</title>
        <authorList>
            <person name="Modregger J."/>
            <person name="Ritter B."/>
            <person name="Witter B."/>
            <person name="Paulsson M."/>
            <person name="Plomann M."/>
        </authorList>
    </citation>
    <scope>INTERACTION WITH PACSIN1; PACSIN2 AND PACSIN3</scope>
</reference>
<reference key="9">
    <citation type="journal article" date="2002" name="Endocrinology">
        <title>The endocytosis-linked protein dynamin associates with caveolin-1 and is tyrosine phosphorylated in response to the activation of a noninternalizing epidermal growth factor receptor mutant.</title>
        <authorList>
            <person name="Kim Y.N."/>
            <person name="Bertics P.J."/>
        </authorList>
    </citation>
    <scope>INTERACTION WITH CAV1</scope>
    <scope>PHOSPHORYLATION</scope>
</reference>
<reference key="10">
    <citation type="journal article" date="2003" name="J. Biol. Chem.">
        <title>Characterization of endophilin B1b, a brain-specific membrane-associated lysophosphatidic acid acyl transferase with properties distinct from endophilin A1.</title>
        <authorList>
            <person name="Modregger J."/>
            <person name="Schmidt A.A."/>
            <person name="Ritter B."/>
            <person name="Huttner W.B."/>
            <person name="Plomann M."/>
        </authorList>
    </citation>
    <scope>INTERACTION WITH SH3GLB1</scope>
</reference>
<reference key="11">
    <citation type="journal article" date="2005" name="Nat. Biotechnol.">
        <title>Immunoaffinity profiling of tyrosine phosphorylation in cancer cells.</title>
        <authorList>
            <person name="Rush J."/>
            <person name="Moritz A."/>
            <person name="Lee K.A."/>
            <person name="Guo A."/>
            <person name="Goss V.L."/>
            <person name="Spek E.J."/>
            <person name="Zhang H."/>
            <person name="Zha X.-M."/>
            <person name="Polakiewicz R.D."/>
            <person name="Comb M.J."/>
        </authorList>
    </citation>
    <scope>IDENTIFICATION BY MASS SPECTROMETRY [LARGE SCALE ANALYSIS]</scope>
</reference>
<reference key="12">
    <citation type="journal article" date="2006" name="Biochemistry">
        <title>Endogenously nitrated proteins in mouse brain: links to neurodegenerative disease.</title>
        <authorList>
            <person name="Sacksteder C.A."/>
            <person name="Qian W.-J."/>
            <person name="Knyushko T.V."/>
            <person name="Wang H."/>
            <person name="Chin M.H."/>
            <person name="Lacan G."/>
            <person name="Melega W.P."/>
            <person name="Camp D.G. II"/>
            <person name="Smith R.D."/>
            <person name="Smith D.J."/>
            <person name="Squier T.C."/>
            <person name="Bigelow D.J."/>
        </authorList>
    </citation>
    <scope>NITRATION [LARGE SCALE ANALYSIS] AT TYR-125</scope>
    <scope>IDENTIFICATION BY MASS SPECTROMETRY [LARGE SCALE ANALYSIS]</scope>
    <source>
        <tissue>Brain</tissue>
    </source>
</reference>
<reference key="13">
    <citation type="journal article" date="2007" name="Science">
        <title>A selective activity-dependent requirement for dynamin 1 in synaptic vesicle endocytosis.</title>
        <authorList>
            <person name="Ferguson S.M."/>
            <person name="Brasnjo G."/>
            <person name="Hayashi M."/>
            <person name="Woelfel M."/>
            <person name="Collesi C."/>
            <person name="Giovedi S."/>
            <person name="Raimondi A."/>
            <person name="Gong L.W."/>
            <person name="Ariel P."/>
            <person name="Paradise S."/>
            <person name="O'toole E."/>
            <person name="Flavell R."/>
            <person name="Cremona O."/>
            <person name="Miesenboeck G."/>
            <person name="Ryan T.A."/>
            <person name="De Camilli P."/>
        </authorList>
    </citation>
    <scope>FUNCTION</scope>
    <scope>DISRUPTION PHENOTYPE</scope>
    <scope>TISSUE SPECIFICITY</scope>
</reference>
<reference key="14">
    <citation type="journal article" date="2008" name="J. Proteome Res.">
        <title>Large-scale identification and evolution indexing of tyrosine phosphorylation sites from murine brain.</title>
        <authorList>
            <person name="Ballif B.A."/>
            <person name="Carey G.R."/>
            <person name="Sunyaev S.R."/>
            <person name="Gygi S.P."/>
        </authorList>
    </citation>
    <scope>PHOSPHORYLATION [LARGE SCALE ANALYSIS] AT TYR-80; TYR-125 AND TYR-354</scope>
    <scope>IDENTIFICATION BY MASS SPECTROMETRY [LARGE SCALE ANALYSIS]</scope>
    <source>
        <tissue>Brain</tissue>
    </source>
</reference>
<reference key="15">
    <citation type="journal article" date="2009" name="Mol. Cell. Proteomics">
        <title>Large scale localization of protein phosphorylation by use of electron capture dissociation mass spectrometry.</title>
        <authorList>
            <person name="Sweet S.M."/>
            <person name="Bailey C.M."/>
            <person name="Cunningham D.L."/>
            <person name="Heath J.K."/>
            <person name="Cooper H.J."/>
        </authorList>
    </citation>
    <scope>PHOSPHORYLATION [LARGE SCALE ANALYSIS] AT SER-847 (ISOFORM 6)</scope>
    <scope>IDENTIFICATION BY MASS SPECTROMETRY [LARGE SCALE ANALYSIS]</scope>
    <source>
        <tissue>Embryonic fibroblast</tissue>
    </source>
</reference>
<reference key="16">
    <citation type="journal article" date="2010" name="Cell">
        <title>A tissue-specific atlas of mouse protein phosphorylation and expression.</title>
        <authorList>
            <person name="Huttlin E.L."/>
            <person name="Jedrychowski M.P."/>
            <person name="Elias J.E."/>
            <person name="Goswami T."/>
            <person name="Rad R."/>
            <person name="Beausoleil S.A."/>
            <person name="Villen J."/>
            <person name="Haas W."/>
            <person name="Sowa M.E."/>
            <person name="Gygi S.P."/>
        </authorList>
    </citation>
    <scope>PHOSPHORYLATION [LARGE SCALE ANALYSIS] AT SER-306 AND SER-512</scope>
    <scope>PHOSPHORYLATION [LARGE SCALE ANALYSIS] AT SER-851 AND SER-857 (ISOFORM 4)</scope>
    <scope>IDENTIFICATION BY MASS SPECTROMETRY [LARGE SCALE ANALYSIS]</scope>
    <source>
        <tissue>Brain</tissue>
        <tissue>Brown adipose tissue</tissue>
        <tissue>Heart</tissue>
        <tissue>Kidney</tissue>
        <tissue>Liver</tissue>
        <tissue>Lung</tissue>
        <tissue>Testis</tissue>
    </source>
</reference>
<reference key="17">
    <citation type="journal article" date="2010" name="Cell. Signal.">
        <title>UNC119 inhibits dynamin and dynamin-dependent endocytic processes.</title>
        <authorList>
            <person name="Karim Z."/>
            <person name="Vepachedu R."/>
            <person name="Gorska M."/>
            <person name="Alam R."/>
        </authorList>
    </citation>
    <scope>FUNCTION</scope>
    <scope>CATALYTIC ACTIVITY</scope>
    <scope>SUBCELLULAR LOCATION</scope>
    <scope>INTERACTION WITH UNC119 AND AMPH</scope>
</reference>
<reference key="18">
    <citation type="journal article" date="2014" name="Mol. Cell. Proteomics">
        <title>Immunoaffinity enrichment and mass spectrometry analysis of protein methylation.</title>
        <authorList>
            <person name="Guo A."/>
            <person name="Gu H."/>
            <person name="Zhou J."/>
            <person name="Mulhern D."/>
            <person name="Wang Y."/>
            <person name="Lee K.A."/>
            <person name="Yang V."/>
            <person name="Aguiar M."/>
            <person name="Kornhauser J."/>
            <person name="Jia X."/>
            <person name="Ren J."/>
            <person name="Beausoleil S.A."/>
            <person name="Silva J.C."/>
            <person name="Vemulapalli V."/>
            <person name="Bedford M.T."/>
            <person name="Comb M.J."/>
        </authorList>
    </citation>
    <scope>METHYLATION [LARGE SCALE ANALYSIS] AT ARG-796</scope>
    <scope>IDENTIFICATION BY MASS SPECTROMETRY [LARGE SCALE ANALYSIS]</scope>
    <source>
        <tissue>Brain</tissue>
    </source>
</reference>
<reference key="19">
    <citation type="journal article" date="2022" name="Cell Calcium">
        <title>Dynamin 1 controls vesicle size and endocytosis at hippocampal synapses.</title>
        <authorList>
            <person name="Shi B."/>
            <person name="Jin Y.H."/>
            <person name="Wu L.G."/>
        </authorList>
    </citation>
    <scope>FUNCTION</scope>
</reference>
<comment type="function">
    <text evidence="2 3 13">Catalyzes the hydrolysis of GTP and utilizes this energy to mediate vesicle scission and participates in many forms of endocytosis, such as clathrin-mediated endocytosis or synaptic vesicle endocytosis as well as rapid endocytosis (RE). Associates to the membrane, through lipid binding, and self-assembles into rings and stacks of interconnected rings through oligomerization to form a helical polymer around the vesicle membrane leading to constriction of invaginated coated pits around their necks. Self-assembly of the helical polymer induces membrane tubules narrowing until the polymer reaches a length sufficient to trigger GTP hydrolysis. Depending on the curvature imposed on the tubules, membrane detachment from the helical polymer upon GTP hydrolysis can cause spontaneous hemifission followed by complete fission. May play a role in regulating early stages of clathrin-mediated endocytosis in non-neuronal cells through its activation by dephosphorylation via the signaling downstream of EGFR (By similarity). Controls vesicle size at a step before fission, during formation of membrane pits, at hippocampal synapses (PubMed:35220002). Controls plastic adaptation of the synaptic vesicle recycling machinery to high levels of activity (PubMed:35220002). Mediates rapid endocytosis (RE), a Ca(2+)-dependent and clathrin- and K(+)-independent process in chromaffin cells. Microtubule-associated force-producing protein involved in producing microtubule bundles and able to bind and hydrolyze GTP (By similarity). Through its interaction with DNAJC6, acts during the early steps of clathrin-coated vesicle (CCV) formation (By similarity).</text>
</comment>
<comment type="catalytic activity">
    <reaction evidence="12">
        <text>GTP + H2O = GDP + phosphate + H(+)</text>
        <dbReference type="Rhea" id="RHEA:19669"/>
        <dbReference type="ChEBI" id="CHEBI:15377"/>
        <dbReference type="ChEBI" id="CHEBI:15378"/>
        <dbReference type="ChEBI" id="CHEBI:37565"/>
        <dbReference type="ChEBI" id="CHEBI:43474"/>
        <dbReference type="ChEBI" id="CHEBI:58189"/>
        <dbReference type="EC" id="3.6.5.5"/>
    </reaction>
    <physiologicalReaction direction="left-to-right" evidence="12">
        <dbReference type="Rhea" id="RHEA:19670"/>
    </physiologicalReaction>
</comment>
<comment type="subunit">
    <text evidence="1 2 8 9 10 12">Homodimer; homodimerization is mediated by the dynamin-type G domain which promotes assembly-stimulated GTPase activity. Homo-tetramer formed from two dimers in the absence of lipid. Oligomerizes into a helical polymer that self-assembles around the vesicle membrane, when associated to the menbrane through lipid binding. Interacts (via C-terminal proline-rich domain (PRD)) with SNX9 (via SH3 domain); this interaction allows regulation of DNM1 self-assembly during late stages of endocytic vesicle formation and supports DNM1's early functions in accelerating clathrin-coated pits (CCPs) maturation in non neuronals cell. Interacts (via C-terminal proline-rich domain (PRD)) with MYO1E (via SH3 domain); this interaction regulates receptor-mediated endocytosis. Interacts with SNX33 (via SH3 domain); this interaction decreases DNM1-dependent endocytosis. Interacts with DIAPH1. Interacts with GRB2 (via SH3 domain); this interaction mediates disassembly of DNM1 polymers, therefore modulates self-assembly (By similarity). Forms a complex with BIN1 (via SH3 domain) and SH3GL2 (via SH3 domain). Forms a complex with SH3GL2 (via SH3 domain) and AMPH (via SH3 domain). Forms a complex with SH3GL2 (via SH3 domain) and SYNJ1. Interacts (via C-terminal proline-rich domain (PRD)) with SYT1; this interaction facilitates vesicle fission during clathrin-mediated endocytosis (CME). Interacts (via C-terminal proline-rich domain (PRD)) with PLCG1 (via SH3 domain); this interaction stimulates the release of GDP from DNM1 and enhances DNM1-dependent endocytosis. Interacts with SNPH; this interaction inhibits the binding of DNM1 to AMPH and DNM1-receptor-mediated endocytosis (By similarity). Interacts with CAV1 (PubMed:11956154). Interacts with SH3GLB1 (via SH3 domain) (PubMed:12456676). Interacts with PACSIN1 (via SH3 domain), PACSIN2 (via SH3 domain) and PACSIN3 (via SH3 domain) (PubMed:11082044). Interacts with UNC119; this interaction decreases DNM1's GTPase activity and affects DNM1's interaction with AMPH (PubMed:19781630). Interacts with AMPH (PubMed:11956154). Interacts (GTP-bound form) with DNAJC6; this interaction allows clathrin-coated vesicle (CCV) formation at the plasma membrane (By similarity).</text>
</comment>
<comment type="interaction">
    <interactant intactId="EBI-397785">
        <id>P39053</id>
    </interactant>
    <interactant intactId="EBI-775139">
        <id>Q7TQF7</id>
        <label>Amph</label>
    </interactant>
    <organismsDiffer>false</organismsDiffer>
    <experiments>3</experiments>
</comment>
<comment type="interaction">
    <interactant intactId="EBI-397785">
        <id>P39053</id>
    </interactant>
    <interactant intactId="EBI-990256">
        <id>Q9JJV2-1</id>
        <label>Pfn2</label>
    </interactant>
    <organismsDiffer>false</organismsDiffer>
    <experiments>2</experiments>
</comment>
<comment type="interaction">
    <interactant intactId="EBI-397785">
        <id>P39053</id>
    </interactant>
    <interactant intactId="EBI-5323863">
        <id>Q5S007</id>
        <label>LRRK2</label>
    </interactant>
    <organismsDiffer>true</organismsDiffer>
    <experiments>3</experiments>
</comment>
<comment type="subcellular location">
    <subcellularLocation>
        <location evidence="2">Cell membrane</location>
    </subcellularLocation>
    <subcellularLocation>
        <location evidence="2">Membrane</location>
        <location evidence="2">Clathrin-coated pit</location>
    </subcellularLocation>
    <subcellularLocation>
        <location evidence="12">Cytoplasmic vesicle</location>
    </subcellularLocation>
    <subcellularLocation>
        <location evidence="1">Presynapse</location>
    </subcellularLocation>
    <subcellularLocation>
        <location evidence="3">Cytoplasmic vesicle</location>
        <location evidence="3">Secretory vesicle</location>
        <location evidence="3">Chromaffin granule</location>
    </subcellularLocation>
    <text evidence="2">Associated to the membrane in a helical polymer shape in a GTP bound state. Transiently recruited to endocytic clathrin-coated pits (CCPs) at a late stage of clathrin-coated vesicle (CCV) formation.</text>
</comment>
<comment type="alternative products">
    <event type="alternative splicing"/>
    <isoform>
        <id>P39053-1</id>
        <name>1</name>
        <sequence type="displayed"/>
    </isoform>
    <isoform>
        <id>P39053-3</id>
        <name>3</name>
        <name>BraDnm8</name>
        <sequence type="described" ref="VSP_007643 VSP_007645"/>
    </isoform>
    <isoform>
        <id>P39053-4</id>
        <name>4</name>
        <name>BraDnm2</name>
        <sequence type="described" ref="VSP_007647"/>
    </isoform>
    <isoform>
        <id>P39053-5</id>
        <name>5</name>
        <name>BreDnm15</name>
        <sequence type="described" ref="VSP_007645"/>
    </isoform>
    <isoform>
        <id>P39053-6</id>
        <name>6</name>
        <sequence type="described" ref="VSP_007644 VSP_024845"/>
    </isoform>
</comment>
<comment type="tissue specificity">
    <text evidence="11">Expressed exclusively in the brain.</text>
</comment>
<comment type="domain">
    <text evidence="2">The dynamin-type G mediates homodimerization and plays a role in self-assembly.</text>
</comment>
<comment type="domain">
    <text evidence="1 2">The C-terminal proline-rich domain (PRD) mediates interaction with SH3-binding partners (By similarity). Is required for DNM1 self-assembly (By similarity).</text>
</comment>
<comment type="domain">
    <text evidence="2">The PH domain binds phosphoinositides such as 1-phosphatidyl-1D-myo-inositol 4,5-bisphosphate, 1-phosphatidyl-1D-myo-inositol 3,4-bisphosphate and 1-phosphatidyl-1D-myo-inositol 3,4,5-trisphosphate, and mediates receptor-mediated endocytosis.</text>
</comment>
<comment type="PTM">
    <text evidence="1 2 9">Phosphorylation at Ser-774 by GSK3B/GSK3-beta leads to inactivation of receptor-mediated endocytosis in non-neuronal cells. Dephosphorylation at Ser-774, through the EGFR downstream signaling, leads to activation and regulates early stages of clathrin-mediated endocytosis (CME) (By similarity). Phosphorylated on Tyr in response to EGF stimulation in cells expressing truncated EGFR (PubMed:11956154). Phosphorylated by CDK5 leading to synaptic vesicle endocytosis (SVE) activation (By similarity).</text>
</comment>
<comment type="disruption phenotype">
    <text evidence="11">Homozygous knockout mice pups liking Dnm1 are in the expected Mendelian ratio (PubMed:17463283). At birth, pups mice breath, move, and suckle (PubMed:17463283). However, a reduction in the ingestion of milk is apparent in pups within several hours after birth, and poor motor coordination becomes obvious over the following days (PubMed:17463283). Pups fail to thrive and die within 2 weeks (PubMed:17463283).</text>
</comment>
<comment type="similarity">
    <text evidence="6">Belongs to the TRAFAC class dynamin-like GTPase superfamily. Dynamin/Fzo/YdjA family.</text>
</comment>
<comment type="sequence caution" evidence="20">
    <conflict type="erroneous initiation">
        <sequence resource="EMBL-CDS" id="BAD90284"/>
    </conflict>
    <text>Extended N-terminus.</text>
</comment>
<comment type="sequence caution" evidence="20">
    <molecule>Isoform 6</molecule>
    <conflict type="frameshift">
        <sequence resource="EMBL-CDS" id="AAA37324"/>
    </conflict>
</comment>
<gene>
    <name evidence="21" type="primary">Dnm1</name>
    <name type="synonym">Dnm</name>
    <name type="synonym">Kiaa4093</name>
</gene>
<sequence>MGNRGMEDLIPLVNRLQDAFSAIGQNADLDLPQIAVVGGQSAGKSSVLENFVGRDFLPRGSGIVTRRPLVLQLVNSTTEYAEFLHCKGKKFTDFEEVRLEIEAETDRVTGTNKGISPVPINLRVYSPHVLNLTLVDLPGMTKVPVGDQPPDIEFQIRDMLMQFVTKENCLILAVSPANSDLANSDALKIAKEVDPQGQRTIGVITKLDLMDEGTDARDVLENKLLPLRRGYIGVVNRSQKDIDGKKDITAALAAERKFFLSHPSYRHLADRMGTPYLQKVLNQQLTNHIRDTLPGLRNKLQSQLLSIEKEVDEYKNFRPDDPARKTKALLQMVQQFAVDFEKRIEGSGDQIDTYELSGGARINRIFHERFPFELVKMEFDEKELRREISYAIKNIHGIRTGLFTPDMAFETIVKKQVKKIREPCLKCVDMVISELISTVRQCTKKLQQYPRLREEMERIVTTHIREREGRTKEQVMLLIDIELAYMNTNHEDFIGFANAQQRSNQMNKKKTSGNQDEILVIRKGWLTINNIGIMKGGSKEYWFVLTAENLSWYKDDEEKEKKYMLSVDNLKLRDVEKGFMSSKHIFALFNTEQRNVYKDYRQLELACETQEEVDSWKASFLRAGVYPERVGDKEKASETEENGSDSFMHSMDPQLERQVETIRNLVDSYMAIVNKTVRDLMPKTIMHLMINNTKEFIFSELLANLYSCGDQNTLMEESAEQAQRRDEMLRMYHALKEALSIIGDINTTTVSTPMPPPVDDSWLQVQSVPAGRRSPTSSPTPQRRAPAVPPARPGSRGPAPGPPPAGSALGGAPPVPSRPGASPDPFGPPPQVPSRPNRAPPGVPSLGAWRLNSPQGKHENRAGKARL</sequence>
<feature type="chain" id="PRO_0000206564" description="Dynamin-1">
    <location>
        <begin position="1"/>
        <end position="867"/>
    </location>
</feature>
<feature type="domain" description="Dynamin-type G" evidence="6">
    <location>
        <begin position="28"/>
        <end position="294"/>
    </location>
</feature>
<feature type="domain" description="PH" evidence="4">
    <location>
        <begin position="515"/>
        <end position="625"/>
    </location>
</feature>
<feature type="domain" description="GED" evidence="5">
    <location>
        <begin position="659"/>
        <end position="750"/>
    </location>
</feature>
<feature type="region of interest" description="G1 motif" evidence="6">
    <location>
        <begin position="38"/>
        <end position="45"/>
    </location>
</feature>
<feature type="region of interest" description="G2 motif" evidence="6">
    <location>
        <begin position="64"/>
        <end position="66"/>
    </location>
</feature>
<feature type="region of interest" description="G3 motif" evidence="6">
    <location>
        <begin position="136"/>
        <end position="139"/>
    </location>
</feature>
<feature type="region of interest" description="G4 motif" evidence="6">
    <location>
        <begin position="205"/>
        <end position="208"/>
    </location>
</feature>
<feature type="region of interest" description="G5 motif" evidence="6">
    <location>
        <begin position="235"/>
        <end position="238"/>
    </location>
</feature>
<feature type="region of interest" description="Disordered" evidence="7">
    <location>
        <begin position="767"/>
        <end position="867"/>
    </location>
</feature>
<feature type="compositionally biased region" description="Pro residues" evidence="7">
    <location>
        <begin position="825"/>
        <end position="843"/>
    </location>
</feature>
<feature type="compositionally biased region" description="Basic and acidic residues" evidence="7">
    <location>
        <begin position="856"/>
        <end position="867"/>
    </location>
</feature>
<feature type="binding site" evidence="2">
    <location>
        <position position="41"/>
    </location>
    <ligand>
        <name>GDP</name>
        <dbReference type="ChEBI" id="CHEBI:58189"/>
    </ligand>
</feature>
<feature type="binding site" evidence="2">
    <location>
        <position position="43"/>
    </location>
    <ligand>
        <name>GDP</name>
        <dbReference type="ChEBI" id="CHEBI:58189"/>
    </ligand>
</feature>
<feature type="binding site" evidence="2">
    <location>
        <position position="44"/>
    </location>
    <ligand>
        <name>GDP</name>
        <dbReference type="ChEBI" id="CHEBI:58189"/>
    </ligand>
</feature>
<feature type="binding site" evidence="2">
    <location>
        <position position="45"/>
    </location>
    <ligand>
        <name>GDP</name>
        <dbReference type="ChEBI" id="CHEBI:58189"/>
    </ligand>
</feature>
<feature type="binding site" evidence="2">
    <location>
        <position position="46"/>
    </location>
    <ligand>
        <name>GDP</name>
        <dbReference type="ChEBI" id="CHEBI:58189"/>
    </ligand>
</feature>
<feature type="binding site" evidence="2">
    <location>
        <position position="59"/>
    </location>
    <ligand>
        <name>GDP</name>
        <dbReference type="ChEBI" id="CHEBI:58189"/>
    </ligand>
</feature>
<feature type="binding site" evidence="2">
    <location>
        <position position="60"/>
    </location>
    <ligand>
        <name>GDP</name>
        <dbReference type="ChEBI" id="CHEBI:58189"/>
    </ligand>
</feature>
<feature type="binding site" evidence="2">
    <location>
        <position position="206"/>
    </location>
    <ligand>
        <name>GDP</name>
        <dbReference type="ChEBI" id="CHEBI:58189"/>
    </ligand>
</feature>
<feature type="binding site" evidence="2">
    <location>
        <position position="208"/>
    </location>
    <ligand>
        <name>GDP</name>
        <dbReference type="ChEBI" id="CHEBI:58189"/>
    </ligand>
</feature>
<feature type="binding site" evidence="2">
    <location>
        <position position="211"/>
    </location>
    <ligand>
        <name>GDP</name>
        <dbReference type="ChEBI" id="CHEBI:58189"/>
    </ligand>
</feature>
<feature type="binding site" evidence="2">
    <location>
        <position position="236"/>
    </location>
    <ligand>
        <name>GDP</name>
        <dbReference type="ChEBI" id="CHEBI:58189"/>
    </ligand>
</feature>
<feature type="binding site" evidence="2">
    <location>
        <position position="237"/>
    </location>
    <ligand>
        <name>GDP</name>
        <dbReference type="ChEBI" id="CHEBI:58189"/>
    </ligand>
</feature>
<feature type="binding site" evidence="2">
    <location>
        <position position="239"/>
    </location>
    <ligand>
        <name>GDP</name>
        <dbReference type="ChEBI" id="CHEBI:58189"/>
    </ligand>
</feature>
<feature type="modified residue" description="Phosphotyrosine" evidence="23">
    <location>
        <position position="80"/>
    </location>
</feature>
<feature type="modified residue" description="3'-nitrotyrosine; alternate" evidence="22">
    <location>
        <position position="125"/>
    </location>
</feature>
<feature type="modified residue" description="Phosphotyrosine; alternate" evidence="23">
    <location>
        <position position="125"/>
    </location>
</feature>
<feature type="modified residue" description="Phosphoserine" evidence="25">
    <location>
        <position position="306"/>
    </location>
</feature>
<feature type="modified residue" description="Phosphoserine" evidence="1">
    <location>
        <position position="347"/>
    </location>
</feature>
<feature type="modified residue" description="Phosphotyrosine" evidence="23">
    <location>
        <position position="354"/>
    </location>
</feature>
<feature type="modified residue" description="Phosphoserine" evidence="25">
    <location>
        <position position="512"/>
    </location>
</feature>
<feature type="modified residue" description="Phosphoserine" evidence="1">
    <location>
        <position position="774"/>
    </location>
</feature>
<feature type="modified residue" description="Phosphoserine" evidence="1">
    <location>
        <position position="778"/>
    </location>
</feature>
<feature type="modified residue" description="Omega-N-methylarginine" evidence="26">
    <location>
        <position position="796"/>
    </location>
</feature>
<feature type="modified residue" description="Phosphoserine" evidence="1">
    <location>
        <position position="822"/>
    </location>
</feature>
<feature type="splice variant" id="VSP_007643" description="In isoform 3." evidence="18 19">
    <original>MAFETIVKKQVKKIREPCLKCVDMVISELISTVRQCTK</original>
    <variation>LAFEATVKKQVQKLKEPSIKCVDMVVSELTSTIRKCSE</variation>
    <location>
        <begin position="407"/>
        <end position="444"/>
    </location>
</feature>
<feature type="splice variant" id="VSP_007644" description="In isoform 6." evidence="16 18">
    <location>
        <begin position="516"/>
        <end position="519"/>
    </location>
</feature>
<feature type="splice variant" id="VSP_007645" description="In isoform 3 and isoform 5." evidence="15 18 19">
    <original>SLGAWRLNSPQGKHENRAGKARL</original>
    <variation>RITISDP</variation>
    <location>
        <begin position="845"/>
        <end position="867"/>
    </location>
</feature>
<feature type="splice variant" id="VSP_007647" description="In isoform 4." evidence="18">
    <original>LGAWRLNSPQGKHENRAGKARL</original>
    <variation>RSGQASPSRPESPRPPFDL</variation>
    <location>
        <begin position="846"/>
        <end position="867"/>
    </location>
</feature>
<feature type="splice variant" id="VSP_024845" description="In isoform 6." evidence="16">
    <original>LGAWRLNSPQGKHENRAGKARL</original>
    <variation>RKGPASPTRPAAPRPTEAPLLDL</variation>
    <location>
        <begin position="846"/>
        <end position="867"/>
    </location>
</feature>
<feature type="sequence conflict" description="In Ref. 1; AAA37318." evidence="20" ref="1">
    <original>V</original>
    <variation>A</variation>
    <location>
        <position position="135"/>
    </location>
</feature>
<feature type="sequence conflict" description="In Ref. 1; AAA37318." evidence="20" ref="1">
    <original>P</original>
    <variation>R</variation>
    <location>
        <position position="450"/>
    </location>
</feature>
<feature type="sequence conflict" description="In Ref. 1; AAA37318." evidence="20" ref="1">
    <original>I</original>
    <variation>S</variation>
    <location>
        <position position="531"/>
    </location>
</feature>
<feature type="sequence conflict" description="In Ref. 2; BAE25726." evidence="20" ref="2">
    <original>R</original>
    <variation>H</variation>
    <location>
        <position position="573"/>
    </location>
</feature>
<feature type="sequence conflict" description="In Ref. 1; AAA37318." evidence="20" ref="1">
    <original>Y</original>
    <variation>N</variation>
    <location>
        <position position="600"/>
    </location>
</feature>
<feature type="sequence conflict" description="In Ref. 5; AAH58623." evidence="20" ref="5">
    <original>A</original>
    <variation>V</variation>
    <location>
        <position position="703"/>
    </location>
</feature>
<feature type="sequence conflict" description="In Ref. 1; AAA37319/AAA37323/AAA37324." evidence="20" ref="1">
    <original>A</original>
    <variation>R</variation>
    <location>
        <position position="722"/>
    </location>
</feature>
<feature type="modified residue" description="Phosphoserine" evidence="25">
    <location sequence="P39053-4">
        <position position="851"/>
    </location>
</feature>
<feature type="modified residue" description="Phosphoserine" evidence="25">
    <location sequence="P39053-4">
        <position position="857"/>
    </location>
</feature>
<feature type="modified residue" description="Phosphoserine" evidence="24">
    <location sequence="P39053-6">
        <position position="847"/>
    </location>
</feature>